<sequence>MENQCLPKKVPGFCSFRYGLAILLHFCNIAIMAQRVCLNLTMVAMVNNTGSPHLSNESVVEMLDNVKNPVYSWSPDIQGLILSSVFFGMVVVQAPVGYLSGIYPMKRIIGSSLFLSSLMSLLLPPAAQVGAALVIVCRVLQGIAQGTVSTGQHEIWVKWAPPLERGRLTSMTLSGFVMGPFIVLLVSGFICDLLGWPMVFYIFGIVGCVLSLSWFFLFFDDPKDHPYMSSSEKDYIISSLMQQASSGRQSLPIKAMLKSLPLWAIILNSFAFIWSNSLLVTYTPTFISTVLHVNVRENGLLSSLPYLLAYICGILAGQMSDFFLTRKIFSIVTVRKLFTTLGSFCPVIFIMCLLYLSYNFYSTVIFLTLANSTLSFSYCGQLINALDIAPRYYGFLKAVTALIGMFGGLISSTLAGLILNQDPEYAWHKIFFLMAGINVTCLVFYFLFAKGEIQDWAKEIKTTRL</sequence>
<evidence type="ECO:0000250" key="1">
    <source>
        <dbReference type="UniProtKB" id="Q14916"/>
    </source>
</evidence>
<evidence type="ECO:0000255" key="2"/>
<evidence type="ECO:0000269" key="3">
    <source>
    </source>
</evidence>
<evidence type="ECO:0000269" key="4">
    <source>
    </source>
</evidence>
<evidence type="ECO:0000305" key="5"/>
<comment type="function">
    <text evidence="1">Important for the resorption of phosphate by the kidney. May be involved in actively transporting phosphate into cells via Na(+) cotransport in the renal brush border membrane. Plays a role in urate transport in the kidney.</text>
</comment>
<comment type="catalytic activity">
    <reaction evidence="1">
        <text>3 Na(+)(out) + phosphate(out) = 3 Na(+)(in) + phosphate(in)</text>
        <dbReference type="Rhea" id="RHEA:71255"/>
        <dbReference type="ChEBI" id="CHEBI:29101"/>
        <dbReference type="ChEBI" id="CHEBI:43474"/>
    </reaction>
</comment>
<comment type="catalytic activity">
    <reaction evidence="1">
        <text>urate(out) = urate(in)</text>
        <dbReference type="Rhea" id="RHEA:60368"/>
        <dbReference type="ChEBI" id="CHEBI:17775"/>
    </reaction>
</comment>
<comment type="subunit">
    <text evidence="3">Interacts with PDZK1.</text>
</comment>
<comment type="subcellular location">
    <subcellularLocation>
        <location evidence="1">Apical cell membrane</location>
        <topology evidence="2">Multi-pass membrane protein</topology>
    </subcellularLocation>
</comment>
<comment type="tissue specificity">
    <text evidence="4">Kidney.</text>
</comment>
<comment type="similarity">
    <text evidence="5">Belongs to the major facilitator superfamily. Sodium/anion cotransporter family.</text>
</comment>
<gene>
    <name type="primary">Slc17a1</name>
    <name type="synonym">Npt1</name>
</gene>
<reference key="1">
    <citation type="journal article" date="1995" name="Am. J. Physiol.">
        <title>Cloning, genetic mapping, and expression analysis of a mouse renal sodium-dependent phosphate cotransporter.</title>
        <authorList>
            <person name="Chong S.S."/>
            <person name="Kozak C.A."/>
            <person name="Liu L."/>
            <person name="Kristjansson K."/>
            <person name="Dunn S.T."/>
            <person name="Bourdeau J.E."/>
            <person name="Hughes M.R."/>
        </authorList>
    </citation>
    <scope>NUCLEOTIDE SEQUENCE [MRNA]</scope>
    <scope>TISSUE SPECIFICITY</scope>
    <source>
        <tissue>Kidney</tissue>
    </source>
</reference>
<reference key="2">
    <citation type="journal article" date="2009" name="PLoS Biol.">
        <title>Lineage-specific biology revealed by a finished genome assembly of the mouse.</title>
        <authorList>
            <person name="Church D.M."/>
            <person name="Goodstadt L."/>
            <person name="Hillier L.W."/>
            <person name="Zody M.C."/>
            <person name="Goldstein S."/>
            <person name="She X."/>
            <person name="Bult C.J."/>
            <person name="Agarwala R."/>
            <person name="Cherry J.L."/>
            <person name="DiCuccio M."/>
            <person name="Hlavina W."/>
            <person name="Kapustin Y."/>
            <person name="Meric P."/>
            <person name="Maglott D."/>
            <person name="Birtle Z."/>
            <person name="Marques A.C."/>
            <person name="Graves T."/>
            <person name="Zhou S."/>
            <person name="Teague B."/>
            <person name="Potamousis K."/>
            <person name="Churas C."/>
            <person name="Place M."/>
            <person name="Herschleb J."/>
            <person name="Runnheim R."/>
            <person name="Forrest D."/>
            <person name="Amos-Landgraf J."/>
            <person name="Schwartz D.C."/>
            <person name="Cheng Z."/>
            <person name="Lindblad-Toh K."/>
            <person name="Eichler E.E."/>
            <person name="Ponting C.P."/>
        </authorList>
    </citation>
    <scope>NUCLEOTIDE SEQUENCE [LARGE SCALE GENOMIC DNA]</scope>
    <source>
        <strain>C57BL/6J</strain>
    </source>
</reference>
<reference key="3">
    <citation type="journal article" date="2001" name="Am. J. Physiol.">
        <title>Murine and human type I Na-phosphate cotransporter genes: structure and promoter activity.</title>
        <authorList>
            <person name="Soumounou Y."/>
            <person name="Gauthier C."/>
            <person name="Tenenhouse H.S."/>
        </authorList>
    </citation>
    <scope>NUCLEOTIDE SEQUENCE [GENOMIC DNA] OF 1-148</scope>
    <source>
        <strain>129/SvJ</strain>
    </source>
</reference>
<reference key="4">
    <citation type="journal article" date="2001" name="J. Biol. Chem.">
        <title>Interaction of the type IIa Na/Pi-cotransporter with PDZ proteins.</title>
        <authorList>
            <person name="Gisler S.M."/>
            <person name="Stagljar I."/>
            <person name="Traebert M."/>
            <person name="Bacic D."/>
            <person name="Biber J."/>
            <person name="Murer H."/>
        </authorList>
    </citation>
    <scope>INTERACTION WITH PDZK1</scope>
</reference>
<proteinExistence type="evidence at protein level"/>
<organism>
    <name type="scientific">Mus musculus</name>
    <name type="common">Mouse</name>
    <dbReference type="NCBI Taxonomy" id="10090"/>
    <lineage>
        <taxon>Eukaryota</taxon>
        <taxon>Metazoa</taxon>
        <taxon>Chordata</taxon>
        <taxon>Craniata</taxon>
        <taxon>Vertebrata</taxon>
        <taxon>Euteleostomi</taxon>
        <taxon>Mammalia</taxon>
        <taxon>Eutheria</taxon>
        <taxon>Euarchontoglires</taxon>
        <taxon>Glires</taxon>
        <taxon>Rodentia</taxon>
        <taxon>Myomorpha</taxon>
        <taxon>Muroidea</taxon>
        <taxon>Muridae</taxon>
        <taxon>Murinae</taxon>
        <taxon>Mus</taxon>
        <taxon>Mus</taxon>
    </lineage>
</organism>
<dbReference type="EMBL" id="X77241">
    <property type="protein sequence ID" value="CAA54459.1"/>
    <property type="molecule type" value="mRNA"/>
</dbReference>
<dbReference type="EMBL" id="AL590388">
    <property type="status" value="NOT_ANNOTATED_CDS"/>
    <property type="molecule type" value="Genomic_DNA"/>
</dbReference>
<dbReference type="EMBL" id="AL606464">
    <property type="status" value="NOT_ANNOTATED_CDS"/>
    <property type="molecule type" value="Genomic_DNA"/>
</dbReference>
<dbReference type="EMBL" id="AF361768">
    <property type="protein sequence ID" value="AAK97542.1"/>
    <property type="molecule type" value="Genomic_DNA"/>
</dbReference>
<dbReference type="EMBL" id="AF361764">
    <property type="protein sequence ID" value="AAK97542.1"/>
    <property type="status" value="JOINED"/>
    <property type="molecule type" value="Genomic_DNA"/>
</dbReference>
<dbReference type="EMBL" id="AF361766">
    <property type="protein sequence ID" value="AAK97542.1"/>
    <property type="status" value="JOINED"/>
    <property type="molecule type" value="Genomic_DNA"/>
</dbReference>
<dbReference type="CCDS" id="CCDS26372.1"/>
<dbReference type="PIR" id="S69915">
    <property type="entry name" value="S69915"/>
</dbReference>
<dbReference type="RefSeq" id="NP_001164109.1">
    <property type="nucleotide sequence ID" value="NM_001170638.1"/>
</dbReference>
<dbReference type="RefSeq" id="NP_033224.3">
    <property type="nucleotide sequence ID" value="NM_009198.3"/>
</dbReference>
<dbReference type="SMR" id="Q61983"/>
<dbReference type="FunCoup" id="Q61983">
    <property type="interactions" value="22"/>
</dbReference>
<dbReference type="IntAct" id="Q61983">
    <property type="interactions" value="4"/>
</dbReference>
<dbReference type="MINT" id="Q61983"/>
<dbReference type="STRING" id="10090.ENSMUSP00000006785"/>
<dbReference type="TCDB" id="2.A.1.14.6">
    <property type="family name" value="the major facilitator superfamily (mfs)"/>
</dbReference>
<dbReference type="GlyCosmos" id="Q61983">
    <property type="glycosylation" value="3 sites, No reported glycans"/>
</dbReference>
<dbReference type="GlyGen" id="Q61983">
    <property type="glycosylation" value="3 sites"/>
</dbReference>
<dbReference type="iPTMnet" id="Q61983"/>
<dbReference type="PhosphoSitePlus" id="Q61983"/>
<dbReference type="jPOST" id="Q61983"/>
<dbReference type="PaxDb" id="10090-ENSMUSP00000006785"/>
<dbReference type="ProteomicsDB" id="293955"/>
<dbReference type="Antibodypedia" id="25435">
    <property type="antibodies" value="70 antibodies from 21 providers"/>
</dbReference>
<dbReference type="DNASU" id="20504"/>
<dbReference type="Ensembl" id="ENSMUST00000006785.8">
    <property type="protein sequence ID" value="ENSMUSP00000006785.8"/>
    <property type="gene ID" value="ENSMUSG00000021335.14"/>
</dbReference>
<dbReference type="Ensembl" id="ENSMUST00000110413.8">
    <property type="protein sequence ID" value="ENSMUSP00000106043.2"/>
    <property type="gene ID" value="ENSMUSG00000021335.14"/>
</dbReference>
<dbReference type="GeneID" id="20504"/>
<dbReference type="KEGG" id="mmu:20504"/>
<dbReference type="UCSC" id="uc007pvf.2">
    <property type="organism name" value="mouse"/>
</dbReference>
<dbReference type="AGR" id="MGI:103209"/>
<dbReference type="CTD" id="6568"/>
<dbReference type="MGI" id="MGI:103209">
    <property type="gene designation" value="Slc17a1"/>
</dbReference>
<dbReference type="VEuPathDB" id="HostDB:ENSMUSG00000021335"/>
<dbReference type="eggNOG" id="KOG2532">
    <property type="taxonomic scope" value="Eukaryota"/>
</dbReference>
<dbReference type="GeneTree" id="ENSGT00940000162346"/>
<dbReference type="HOGENOM" id="CLU_001265_5_0_1"/>
<dbReference type="InParanoid" id="Q61983"/>
<dbReference type="OMA" id="TAQHEIW"/>
<dbReference type="OrthoDB" id="2985014at2759"/>
<dbReference type="PhylomeDB" id="Q61983"/>
<dbReference type="TreeFam" id="TF313535"/>
<dbReference type="Reactome" id="R-MMU-428643">
    <property type="pathway name" value="Organic anion transporters"/>
</dbReference>
<dbReference type="BioGRID-ORCS" id="20504">
    <property type="hits" value="5 hits in 77 CRISPR screens"/>
</dbReference>
<dbReference type="ChiTaRS" id="Slc17a1">
    <property type="organism name" value="mouse"/>
</dbReference>
<dbReference type="PRO" id="PR:Q61983"/>
<dbReference type="Proteomes" id="UP000000589">
    <property type="component" value="Chromosome 13"/>
</dbReference>
<dbReference type="RNAct" id="Q61983">
    <property type="molecule type" value="protein"/>
</dbReference>
<dbReference type="Bgee" id="ENSMUSG00000021335">
    <property type="expression patterns" value="Expressed in right kidney and 30 other cell types or tissues"/>
</dbReference>
<dbReference type="ExpressionAtlas" id="Q61983">
    <property type="expression patterns" value="baseline and differential"/>
</dbReference>
<dbReference type="GO" id="GO:0016324">
    <property type="term" value="C:apical plasma membrane"/>
    <property type="evidence" value="ECO:0000250"/>
    <property type="project" value="UniProtKB"/>
</dbReference>
<dbReference type="GO" id="GO:0005315">
    <property type="term" value="F:phosphate transmembrane transporter activity"/>
    <property type="evidence" value="ECO:0007669"/>
    <property type="project" value="InterPro"/>
</dbReference>
<dbReference type="GO" id="GO:0015293">
    <property type="term" value="F:symporter activity"/>
    <property type="evidence" value="ECO:0007669"/>
    <property type="project" value="UniProtKB-KW"/>
</dbReference>
<dbReference type="GO" id="GO:0035435">
    <property type="term" value="P:phosphate ion transmembrane transport"/>
    <property type="evidence" value="ECO:0007669"/>
    <property type="project" value="InterPro"/>
</dbReference>
<dbReference type="GO" id="GO:0006814">
    <property type="term" value="P:sodium ion transport"/>
    <property type="evidence" value="ECO:0007669"/>
    <property type="project" value="UniProtKB-KW"/>
</dbReference>
<dbReference type="GO" id="GO:0044341">
    <property type="term" value="P:sodium-dependent phosphate transport"/>
    <property type="evidence" value="ECO:0000250"/>
    <property type="project" value="UniProtKB"/>
</dbReference>
<dbReference type="GO" id="GO:0046415">
    <property type="term" value="P:urate metabolic process"/>
    <property type="evidence" value="ECO:0007669"/>
    <property type="project" value="Ensembl"/>
</dbReference>
<dbReference type="GO" id="GO:0015747">
    <property type="term" value="P:urate transport"/>
    <property type="evidence" value="ECO:0000250"/>
    <property type="project" value="UniProtKB"/>
</dbReference>
<dbReference type="CDD" id="cd17318">
    <property type="entry name" value="MFS_SLC17"/>
    <property type="match status" value="1"/>
</dbReference>
<dbReference type="FunFam" id="1.20.1250.20:FF:000003">
    <property type="entry name" value="Solute carrier family 17 member 3"/>
    <property type="match status" value="1"/>
</dbReference>
<dbReference type="FunFam" id="1.20.1250.20:FF:000060">
    <property type="entry name" value="Solute carrier family 17 member 3"/>
    <property type="match status" value="1"/>
</dbReference>
<dbReference type="Gene3D" id="1.20.1250.20">
    <property type="entry name" value="MFS general substrate transporter like domains"/>
    <property type="match status" value="2"/>
</dbReference>
<dbReference type="InterPro" id="IPR011701">
    <property type="entry name" value="MFS"/>
</dbReference>
<dbReference type="InterPro" id="IPR020846">
    <property type="entry name" value="MFS_dom"/>
</dbReference>
<dbReference type="InterPro" id="IPR050382">
    <property type="entry name" value="MFS_Na/Anion_cotransporter"/>
</dbReference>
<dbReference type="InterPro" id="IPR036259">
    <property type="entry name" value="MFS_trans_sf"/>
</dbReference>
<dbReference type="InterPro" id="IPR004745">
    <property type="entry name" value="Pi_cotranspt"/>
</dbReference>
<dbReference type="NCBIfam" id="TIGR00894">
    <property type="entry name" value="2A0114euk"/>
    <property type="match status" value="1"/>
</dbReference>
<dbReference type="PANTHER" id="PTHR11662:SF26">
    <property type="entry name" value="SODIUM-DEPENDENT PHOSPHATE TRANSPORT PROTEIN 1"/>
    <property type="match status" value="1"/>
</dbReference>
<dbReference type="PANTHER" id="PTHR11662">
    <property type="entry name" value="SOLUTE CARRIER FAMILY 17"/>
    <property type="match status" value="1"/>
</dbReference>
<dbReference type="Pfam" id="PF07690">
    <property type="entry name" value="MFS_1"/>
    <property type="match status" value="1"/>
</dbReference>
<dbReference type="SUPFAM" id="SSF103473">
    <property type="entry name" value="MFS general substrate transporter"/>
    <property type="match status" value="1"/>
</dbReference>
<dbReference type="PROSITE" id="PS50850">
    <property type="entry name" value="MFS"/>
    <property type="match status" value="1"/>
</dbReference>
<accession>Q61983</accession>
<accession>A9Z1Z4</accession>
<accession>Q91YA1</accession>
<keyword id="KW-1003">Cell membrane</keyword>
<keyword id="KW-0325">Glycoprotein</keyword>
<keyword id="KW-0406">Ion transport</keyword>
<keyword id="KW-0472">Membrane</keyword>
<keyword id="KW-1185">Reference proteome</keyword>
<keyword id="KW-0915">Sodium</keyword>
<keyword id="KW-0739">Sodium transport</keyword>
<keyword id="KW-0769">Symport</keyword>
<keyword id="KW-0812">Transmembrane</keyword>
<keyword id="KW-1133">Transmembrane helix</keyword>
<keyword id="KW-0813">Transport</keyword>
<protein>
    <recommendedName>
        <fullName>Sodium-dependent phosphate transport protein 1</fullName>
    </recommendedName>
    <alternativeName>
        <fullName>Na(+)/PI cotransporter 1</fullName>
    </alternativeName>
    <alternativeName>
        <fullName>Renal Na(+)-dependent phosphate cotransporter 1</fullName>
    </alternativeName>
    <alternativeName>
        <fullName>Renal sodium-dependent phosphate transport protein 1</fullName>
        <shortName>Renal sodium-phosphate transport protein 1</shortName>
    </alternativeName>
    <alternativeName>
        <fullName>Sodium/phosphate cotransporter 1</fullName>
    </alternativeName>
    <alternativeName>
        <fullName>Solute carrier family 17 member 1</fullName>
    </alternativeName>
</protein>
<feature type="chain" id="PRO_0000220937" description="Sodium-dependent phosphate transport protein 1">
    <location>
        <begin position="1"/>
        <end position="465"/>
    </location>
</feature>
<feature type="transmembrane region" description="Helical" evidence="2">
    <location>
        <begin position="79"/>
        <end position="99"/>
    </location>
</feature>
<feature type="transmembrane region" description="Helical" evidence="2">
    <location>
        <begin position="117"/>
        <end position="137"/>
    </location>
</feature>
<feature type="transmembrane region" description="Helical" evidence="2">
    <location>
        <begin position="176"/>
        <end position="196"/>
    </location>
</feature>
<feature type="transmembrane region" description="Helical" evidence="2">
    <location>
        <begin position="199"/>
        <end position="219"/>
    </location>
</feature>
<feature type="transmembrane region" description="Helical" evidence="2">
    <location>
        <begin position="260"/>
        <end position="280"/>
    </location>
</feature>
<feature type="transmembrane region" description="Helical" evidence="2">
    <location>
        <begin position="304"/>
        <end position="324"/>
    </location>
</feature>
<feature type="transmembrane region" description="Helical" evidence="2">
    <location>
        <begin position="337"/>
        <end position="356"/>
    </location>
</feature>
<feature type="transmembrane region" description="Helical" evidence="2">
    <location>
        <begin position="363"/>
        <end position="383"/>
    </location>
</feature>
<feature type="transmembrane region" description="Helical" evidence="2">
    <location>
        <begin position="399"/>
        <end position="419"/>
    </location>
</feature>
<feature type="transmembrane region" description="Helical" evidence="2">
    <location>
        <begin position="429"/>
        <end position="449"/>
    </location>
</feature>
<feature type="glycosylation site" description="N-linked (GlcNAc...) asparagine" evidence="2">
    <location>
        <position position="39"/>
    </location>
</feature>
<feature type="glycosylation site" description="N-linked (GlcNAc...) asparagine" evidence="2">
    <location>
        <position position="47"/>
    </location>
</feature>
<feature type="glycosylation site" description="N-linked (GlcNAc...) asparagine" evidence="2">
    <location>
        <position position="56"/>
    </location>
</feature>
<feature type="sequence conflict" description="In Ref. 1; CAA54459 and 3; AAK97542." evidence="5" ref="1 3">
    <original>L</original>
    <variation>I</variation>
    <location>
        <position position="123"/>
    </location>
</feature>
<feature type="sequence conflict" description="In Ref. 1; CAA54459." evidence="5" ref="1">
    <original>F</original>
    <variation>S</variation>
    <location>
        <position position="431"/>
    </location>
</feature>
<name>NPT1_MOUSE</name>